<gene>
    <name type="ordered locus">jhp_0545</name>
</gene>
<comment type="function">
    <text evidence="1">Catalyzes the decarboxylative condensation of pimeloyl-[acyl-carrier protein] and L-alanine to produce 8-amino-7-oxononanoate (AON), [acyl-carrier protein], and carbon dioxide.</text>
</comment>
<comment type="catalytic activity">
    <reaction>
        <text>6-carboxyhexanoyl-[ACP] + L-alanine + H(+) = (8S)-8-amino-7-oxononanoate + holo-[ACP] + CO2</text>
        <dbReference type="Rhea" id="RHEA:42288"/>
        <dbReference type="Rhea" id="RHEA-COMP:9685"/>
        <dbReference type="Rhea" id="RHEA-COMP:9955"/>
        <dbReference type="ChEBI" id="CHEBI:15378"/>
        <dbReference type="ChEBI" id="CHEBI:16526"/>
        <dbReference type="ChEBI" id="CHEBI:57972"/>
        <dbReference type="ChEBI" id="CHEBI:64479"/>
        <dbReference type="ChEBI" id="CHEBI:78846"/>
        <dbReference type="ChEBI" id="CHEBI:149468"/>
        <dbReference type="EC" id="2.3.1.47"/>
    </reaction>
</comment>
<comment type="cofactor">
    <cofactor evidence="1">
        <name>pyridoxal 5'-phosphate</name>
        <dbReference type="ChEBI" id="CHEBI:597326"/>
    </cofactor>
</comment>
<comment type="pathway">
    <text>Cofactor biosynthesis; biotin biosynthesis.</text>
</comment>
<comment type="subunit">
    <text evidence="1">Homodimer.</text>
</comment>
<comment type="similarity">
    <text evidence="2">Belongs to the class-II pyridoxal-phosphate-dependent aminotransferase family. BioF subfamily.</text>
</comment>
<sequence length="373" mass="42078">MFSKSLEALHHVKRYRKRELFDPLLKDYASNDYLGLSVKKDLLQNAFDKLQSFDCHSPKASMLVNGYHPLHAELEERLADLLEFESALLVGSGFLGNLALIDTLLVKNALLFMDAHYHASGIFSTKIKPNQVIFFSHNDIKDLKQKLFNAPKNKLKFIAIEGVYSMDASIAPYDFYEIIQETPNAFLIVDEAHSFGTIGENLLGFLEYHRIKEKDKIIKLSTFSKALASYGACVLAPLQVIEFLTNRAKSVIYTTALSLLDTALTLAHLEYFIAQKQELKNELSKHQQIIFETLGVRTPTGFFTLEFENNPALLNAQYFLKEKGFLVGAIRPPTVSKPLLRVSLSLKNSLEDTKELANALLDYSKIQSSFKSG</sequence>
<reference key="1">
    <citation type="journal article" date="1999" name="Nature">
        <title>Genomic sequence comparison of two unrelated isolates of the human gastric pathogen Helicobacter pylori.</title>
        <authorList>
            <person name="Alm R.A."/>
            <person name="Ling L.-S.L."/>
            <person name="Moir D.T."/>
            <person name="King B.L."/>
            <person name="Brown E.D."/>
            <person name="Doig P.C."/>
            <person name="Smith D.R."/>
            <person name="Noonan B."/>
            <person name="Guild B.C."/>
            <person name="deJonge B.L."/>
            <person name="Carmel G."/>
            <person name="Tummino P.J."/>
            <person name="Caruso A."/>
            <person name="Uria-Nickelsen M."/>
            <person name="Mills D.M."/>
            <person name="Ives C."/>
            <person name="Gibson R."/>
            <person name="Merberg D."/>
            <person name="Mills S.D."/>
            <person name="Jiang Q."/>
            <person name="Taylor D.E."/>
            <person name="Vovis G.F."/>
            <person name="Trust T.J."/>
        </authorList>
    </citation>
    <scope>NUCLEOTIDE SEQUENCE [LARGE SCALE GENOMIC DNA]</scope>
    <source>
        <strain>J99 / ATCC 700824</strain>
    </source>
</reference>
<name>BIOF_HELPJ</name>
<protein>
    <recommendedName>
        <fullName>8-amino-7-oxononanoate synthase</fullName>
        <shortName>AONS</shortName>
        <ecNumber>2.3.1.47</ecNumber>
    </recommendedName>
    <alternativeName>
        <fullName>7-keto-8-amino-pelargonic acid synthase</fullName>
        <shortName>7-KAP synthase</shortName>
        <shortName>KAPA synthase</shortName>
    </alternativeName>
    <alternativeName>
        <fullName>8-amino-7-ketopelargonate synthase</fullName>
    </alternativeName>
    <alternativeName>
        <fullName>Alpha-oxoamine synthase</fullName>
    </alternativeName>
</protein>
<feature type="chain" id="PRO_0000163815" description="8-amino-7-oxononanoate synthase">
    <location>
        <begin position="1"/>
        <end position="373"/>
    </location>
</feature>
<feature type="binding site" evidence="1">
    <location>
        <position position="16"/>
    </location>
    <ligand>
        <name>substrate</name>
    </ligand>
</feature>
<feature type="binding site" evidence="1">
    <location>
        <begin position="93"/>
        <end position="94"/>
    </location>
    <ligand>
        <name>pyridoxal 5'-phosphate</name>
        <dbReference type="ChEBI" id="CHEBI:597326"/>
    </ligand>
</feature>
<feature type="binding site" evidence="1">
    <location>
        <position position="118"/>
    </location>
    <ligand>
        <name>substrate</name>
    </ligand>
</feature>
<feature type="binding site" evidence="1">
    <location>
        <position position="165"/>
    </location>
    <ligand>
        <name>pyridoxal 5'-phosphate</name>
        <dbReference type="ChEBI" id="CHEBI:597326"/>
    </ligand>
</feature>
<feature type="binding site" evidence="1">
    <location>
        <begin position="190"/>
        <end position="193"/>
    </location>
    <ligand>
        <name>pyridoxal 5'-phosphate</name>
        <dbReference type="ChEBI" id="CHEBI:597326"/>
    </ligand>
</feature>
<feature type="binding site" evidence="1">
    <location>
        <begin position="222"/>
        <end position="225"/>
    </location>
    <ligand>
        <name>pyridoxal 5'-phosphate</name>
        <dbReference type="ChEBI" id="CHEBI:597326"/>
    </ligand>
</feature>
<feature type="binding site" evidence="1">
    <location>
        <position position="334"/>
    </location>
    <ligand>
        <name>substrate</name>
    </ligand>
</feature>
<feature type="modified residue" description="N6-(pyridoxal phosphate)lysine" evidence="1">
    <location>
        <position position="225"/>
    </location>
</feature>
<keyword id="KW-0012">Acyltransferase</keyword>
<keyword id="KW-0093">Biotin biosynthesis</keyword>
<keyword id="KW-0663">Pyridoxal phosphate</keyword>
<keyword id="KW-0808">Transferase</keyword>
<proteinExistence type="inferred from homology"/>
<accession>Q9ZLN3</accession>
<evidence type="ECO:0000250" key="1"/>
<evidence type="ECO:0000305" key="2"/>
<organism>
    <name type="scientific">Helicobacter pylori (strain J99 / ATCC 700824)</name>
    <name type="common">Campylobacter pylori J99</name>
    <dbReference type="NCBI Taxonomy" id="85963"/>
    <lineage>
        <taxon>Bacteria</taxon>
        <taxon>Pseudomonadati</taxon>
        <taxon>Campylobacterota</taxon>
        <taxon>Epsilonproteobacteria</taxon>
        <taxon>Campylobacterales</taxon>
        <taxon>Helicobacteraceae</taxon>
        <taxon>Helicobacter</taxon>
    </lineage>
</organism>
<dbReference type="EC" id="2.3.1.47"/>
<dbReference type="EMBL" id="AE001439">
    <property type="protein sequence ID" value="AAD06130.1"/>
    <property type="molecule type" value="Genomic_DNA"/>
</dbReference>
<dbReference type="PIR" id="G71917">
    <property type="entry name" value="G71917"/>
</dbReference>
<dbReference type="RefSeq" id="WP_000491878.1">
    <property type="nucleotide sequence ID" value="NC_000921.1"/>
</dbReference>
<dbReference type="SMR" id="Q9ZLN3"/>
<dbReference type="KEGG" id="hpj:jhp_0545"/>
<dbReference type="PATRIC" id="fig|85963.30.peg.448"/>
<dbReference type="eggNOG" id="COG0156">
    <property type="taxonomic scope" value="Bacteria"/>
</dbReference>
<dbReference type="UniPathway" id="UPA00078"/>
<dbReference type="Proteomes" id="UP000000804">
    <property type="component" value="Chromosome"/>
</dbReference>
<dbReference type="GO" id="GO:0008710">
    <property type="term" value="F:8-amino-7-oxononanoate synthase activity"/>
    <property type="evidence" value="ECO:0007669"/>
    <property type="project" value="UniProtKB-EC"/>
</dbReference>
<dbReference type="GO" id="GO:0030170">
    <property type="term" value="F:pyridoxal phosphate binding"/>
    <property type="evidence" value="ECO:0007669"/>
    <property type="project" value="InterPro"/>
</dbReference>
<dbReference type="GO" id="GO:0009102">
    <property type="term" value="P:biotin biosynthetic process"/>
    <property type="evidence" value="ECO:0007669"/>
    <property type="project" value="UniProtKB-UniPathway"/>
</dbReference>
<dbReference type="Gene3D" id="3.90.1150.10">
    <property type="entry name" value="Aspartate Aminotransferase, domain 1"/>
    <property type="match status" value="1"/>
</dbReference>
<dbReference type="Gene3D" id="3.40.640.10">
    <property type="entry name" value="Type I PLP-dependent aspartate aminotransferase-like (Major domain)"/>
    <property type="match status" value="1"/>
</dbReference>
<dbReference type="InterPro" id="IPR001917">
    <property type="entry name" value="Aminotrans_II_pyridoxalP_BS"/>
</dbReference>
<dbReference type="InterPro" id="IPR004839">
    <property type="entry name" value="Aminotransferase_I/II_large"/>
</dbReference>
<dbReference type="InterPro" id="IPR050087">
    <property type="entry name" value="AON_synthase_class-II"/>
</dbReference>
<dbReference type="InterPro" id="IPR015424">
    <property type="entry name" value="PyrdxlP-dep_Trfase"/>
</dbReference>
<dbReference type="InterPro" id="IPR015421">
    <property type="entry name" value="PyrdxlP-dep_Trfase_major"/>
</dbReference>
<dbReference type="InterPro" id="IPR015422">
    <property type="entry name" value="PyrdxlP-dep_Trfase_small"/>
</dbReference>
<dbReference type="PANTHER" id="PTHR13693:SF77">
    <property type="entry name" value="8-AMINO-7-OXONONANOATE SYNTHASE"/>
    <property type="match status" value="1"/>
</dbReference>
<dbReference type="PANTHER" id="PTHR13693">
    <property type="entry name" value="CLASS II AMINOTRANSFERASE/8-AMINO-7-OXONONANOATE SYNTHASE"/>
    <property type="match status" value="1"/>
</dbReference>
<dbReference type="Pfam" id="PF00155">
    <property type="entry name" value="Aminotran_1_2"/>
    <property type="match status" value="1"/>
</dbReference>
<dbReference type="SUPFAM" id="SSF53383">
    <property type="entry name" value="PLP-dependent transferases"/>
    <property type="match status" value="1"/>
</dbReference>
<dbReference type="PROSITE" id="PS00599">
    <property type="entry name" value="AA_TRANSFER_CLASS_2"/>
    <property type="match status" value="1"/>
</dbReference>